<dbReference type="EC" id="2.7.7.3" evidence="1"/>
<dbReference type="EMBL" id="AE003852">
    <property type="protein sequence ID" value="AAF93398.1"/>
    <property type="molecule type" value="Genomic_DNA"/>
</dbReference>
<dbReference type="PIR" id="H82347">
    <property type="entry name" value="H82347"/>
</dbReference>
<dbReference type="RefSeq" id="NP_229879.1">
    <property type="nucleotide sequence ID" value="NC_002505.1"/>
</dbReference>
<dbReference type="RefSeq" id="WP_000078888.1">
    <property type="nucleotide sequence ID" value="NZ_LT906614.1"/>
</dbReference>
<dbReference type="SMR" id="Q9KVC4"/>
<dbReference type="STRING" id="243277.VC_0222"/>
<dbReference type="DNASU" id="2614272"/>
<dbReference type="EnsemblBacteria" id="AAF93398">
    <property type="protein sequence ID" value="AAF93398"/>
    <property type="gene ID" value="VC_0222"/>
</dbReference>
<dbReference type="KEGG" id="vch:VC_0222"/>
<dbReference type="PATRIC" id="fig|243277.26.peg.204"/>
<dbReference type="eggNOG" id="COG0669">
    <property type="taxonomic scope" value="Bacteria"/>
</dbReference>
<dbReference type="HOGENOM" id="CLU_100149_0_1_6"/>
<dbReference type="UniPathway" id="UPA00241">
    <property type="reaction ID" value="UER00355"/>
</dbReference>
<dbReference type="Proteomes" id="UP000000584">
    <property type="component" value="Chromosome 1"/>
</dbReference>
<dbReference type="GO" id="GO:0005737">
    <property type="term" value="C:cytoplasm"/>
    <property type="evidence" value="ECO:0007669"/>
    <property type="project" value="UniProtKB-SubCell"/>
</dbReference>
<dbReference type="GO" id="GO:0005524">
    <property type="term" value="F:ATP binding"/>
    <property type="evidence" value="ECO:0007669"/>
    <property type="project" value="UniProtKB-KW"/>
</dbReference>
<dbReference type="GO" id="GO:0004595">
    <property type="term" value="F:pantetheine-phosphate adenylyltransferase activity"/>
    <property type="evidence" value="ECO:0000318"/>
    <property type="project" value="GO_Central"/>
</dbReference>
<dbReference type="GO" id="GO:0015937">
    <property type="term" value="P:coenzyme A biosynthetic process"/>
    <property type="evidence" value="ECO:0000318"/>
    <property type="project" value="GO_Central"/>
</dbReference>
<dbReference type="CDD" id="cd02163">
    <property type="entry name" value="PPAT"/>
    <property type="match status" value="1"/>
</dbReference>
<dbReference type="FunFam" id="3.40.50.620:FF:000012">
    <property type="entry name" value="Phosphopantetheine adenylyltransferase"/>
    <property type="match status" value="1"/>
</dbReference>
<dbReference type="Gene3D" id="3.40.50.620">
    <property type="entry name" value="HUPs"/>
    <property type="match status" value="1"/>
</dbReference>
<dbReference type="HAMAP" id="MF_00151">
    <property type="entry name" value="PPAT_bact"/>
    <property type="match status" value="1"/>
</dbReference>
<dbReference type="InterPro" id="IPR004821">
    <property type="entry name" value="Cyt_trans-like"/>
</dbReference>
<dbReference type="InterPro" id="IPR001980">
    <property type="entry name" value="PPAT"/>
</dbReference>
<dbReference type="InterPro" id="IPR014729">
    <property type="entry name" value="Rossmann-like_a/b/a_fold"/>
</dbReference>
<dbReference type="NCBIfam" id="TIGR01510">
    <property type="entry name" value="coaD_prev_kdtB"/>
    <property type="match status" value="1"/>
</dbReference>
<dbReference type="NCBIfam" id="TIGR00125">
    <property type="entry name" value="cyt_tran_rel"/>
    <property type="match status" value="1"/>
</dbReference>
<dbReference type="PANTHER" id="PTHR21342">
    <property type="entry name" value="PHOSPHOPANTETHEINE ADENYLYLTRANSFERASE"/>
    <property type="match status" value="1"/>
</dbReference>
<dbReference type="PANTHER" id="PTHR21342:SF1">
    <property type="entry name" value="PHOSPHOPANTETHEINE ADENYLYLTRANSFERASE"/>
    <property type="match status" value="1"/>
</dbReference>
<dbReference type="Pfam" id="PF01467">
    <property type="entry name" value="CTP_transf_like"/>
    <property type="match status" value="1"/>
</dbReference>
<dbReference type="PRINTS" id="PR01020">
    <property type="entry name" value="LPSBIOSNTHSS"/>
</dbReference>
<dbReference type="SUPFAM" id="SSF52374">
    <property type="entry name" value="Nucleotidylyl transferase"/>
    <property type="match status" value="1"/>
</dbReference>
<accession>Q9KVC4</accession>
<proteinExistence type="inferred from homology"/>
<protein>
    <recommendedName>
        <fullName evidence="1">Phosphopantetheine adenylyltransferase</fullName>
        <ecNumber evidence="1">2.7.7.3</ecNumber>
    </recommendedName>
    <alternativeName>
        <fullName evidence="1">Dephospho-CoA pyrophosphorylase</fullName>
    </alternativeName>
    <alternativeName>
        <fullName evidence="1">Pantetheine-phosphate adenylyltransferase</fullName>
        <shortName evidence="1">PPAT</shortName>
    </alternativeName>
</protein>
<comment type="function">
    <text evidence="1">Reversibly transfers an adenylyl group from ATP to 4'-phosphopantetheine, yielding dephospho-CoA (dPCoA) and pyrophosphate.</text>
</comment>
<comment type="catalytic activity">
    <reaction evidence="1">
        <text>(R)-4'-phosphopantetheine + ATP + H(+) = 3'-dephospho-CoA + diphosphate</text>
        <dbReference type="Rhea" id="RHEA:19801"/>
        <dbReference type="ChEBI" id="CHEBI:15378"/>
        <dbReference type="ChEBI" id="CHEBI:30616"/>
        <dbReference type="ChEBI" id="CHEBI:33019"/>
        <dbReference type="ChEBI" id="CHEBI:57328"/>
        <dbReference type="ChEBI" id="CHEBI:61723"/>
        <dbReference type="EC" id="2.7.7.3"/>
    </reaction>
</comment>
<comment type="cofactor">
    <cofactor evidence="1">
        <name>Mg(2+)</name>
        <dbReference type="ChEBI" id="CHEBI:18420"/>
    </cofactor>
</comment>
<comment type="pathway">
    <text evidence="1">Cofactor biosynthesis; coenzyme A biosynthesis; CoA from (R)-pantothenate: step 4/5.</text>
</comment>
<comment type="subunit">
    <text evidence="1">Homohexamer.</text>
</comment>
<comment type="subcellular location">
    <subcellularLocation>
        <location evidence="1">Cytoplasm</location>
    </subcellularLocation>
</comment>
<comment type="similarity">
    <text evidence="1">Belongs to the bacterial CoaD family.</text>
</comment>
<organism>
    <name type="scientific">Vibrio cholerae serotype O1 (strain ATCC 39315 / El Tor Inaba N16961)</name>
    <dbReference type="NCBI Taxonomy" id="243277"/>
    <lineage>
        <taxon>Bacteria</taxon>
        <taxon>Pseudomonadati</taxon>
        <taxon>Pseudomonadota</taxon>
        <taxon>Gammaproteobacteria</taxon>
        <taxon>Vibrionales</taxon>
        <taxon>Vibrionaceae</taxon>
        <taxon>Vibrio</taxon>
    </lineage>
</organism>
<gene>
    <name evidence="1" type="primary">coaD</name>
    <name type="ordered locus">VC_0222</name>
</gene>
<feature type="chain" id="PRO_0000156303" description="Phosphopantetheine adenylyltransferase">
    <location>
        <begin position="1"/>
        <end position="164"/>
    </location>
</feature>
<feature type="binding site" evidence="1">
    <location>
        <begin position="14"/>
        <end position="15"/>
    </location>
    <ligand>
        <name>ATP</name>
        <dbReference type="ChEBI" id="CHEBI:30616"/>
    </ligand>
</feature>
<feature type="binding site" evidence="1">
    <location>
        <position position="14"/>
    </location>
    <ligand>
        <name>substrate</name>
    </ligand>
</feature>
<feature type="binding site" evidence="1">
    <location>
        <position position="22"/>
    </location>
    <ligand>
        <name>ATP</name>
        <dbReference type="ChEBI" id="CHEBI:30616"/>
    </ligand>
</feature>
<feature type="binding site" evidence="1">
    <location>
        <position position="46"/>
    </location>
    <ligand>
        <name>substrate</name>
    </ligand>
</feature>
<feature type="binding site" evidence="1">
    <location>
        <position position="78"/>
    </location>
    <ligand>
        <name>substrate</name>
    </ligand>
</feature>
<feature type="binding site" evidence="1">
    <location>
        <position position="92"/>
    </location>
    <ligand>
        <name>substrate</name>
    </ligand>
</feature>
<feature type="binding site" evidence="1">
    <location>
        <begin position="93"/>
        <end position="95"/>
    </location>
    <ligand>
        <name>ATP</name>
        <dbReference type="ChEBI" id="CHEBI:30616"/>
    </ligand>
</feature>
<feature type="binding site" evidence="1">
    <location>
        <position position="103"/>
    </location>
    <ligand>
        <name>ATP</name>
        <dbReference type="ChEBI" id="CHEBI:30616"/>
    </ligand>
</feature>
<feature type="binding site" evidence="1">
    <location>
        <begin position="128"/>
        <end position="134"/>
    </location>
    <ligand>
        <name>ATP</name>
        <dbReference type="ChEBI" id="CHEBI:30616"/>
    </ligand>
</feature>
<feature type="site" description="Transition state stabilizer" evidence="1">
    <location>
        <position position="22"/>
    </location>
</feature>
<reference key="1">
    <citation type="journal article" date="2000" name="Nature">
        <title>DNA sequence of both chromosomes of the cholera pathogen Vibrio cholerae.</title>
        <authorList>
            <person name="Heidelberg J.F."/>
            <person name="Eisen J.A."/>
            <person name="Nelson W.C."/>
            <person name="Clayton R.A."/>
            <person name="Gwinn M.L."/>
            <person name="Dodson R.J."/>
            <person name="Haft D.H."/>
            <person name="Hickey E.K."/>
            <person name="Peterson J.D."/>
            <person name="Umayam L.A."/>
            <person name="Gill S.R."/>
            <person name="Nelson K.E."/>
            <person name="Read T.D."/>
            <person name="Tettelin H."/>
            <person name="Richardson D.L."/>
            <person name="Ermolaeva M.D."/>
            <person name="Vamathevan J.J."/>
            <person name="Bass S."/>
            <person name="Qin H."/>
            <person name="Dragoi I."/>
            <person name="Sellers P."/>
            <person name="McDonald L.A."/>
            <person name="Utterback T.R."/>
            <person name="Fleischmann R.D."/>
            <person name="Nierman W.C."/>
            <person name="White O."/>
            <person name="Salzberg S.L."/>
            <person name="Smith H.O."/>
            <person name="Colwell R.R."/>
            <person name="Mekalanos J.J."/>
            <person name="Venter J.C."/>
            <person name="Fraser C.M."/>
        </authorList>
    </citation>
    <scope>NUCLEOTIDE SEQUENCE [LARGE SCALE GENOMIC DNA]</scope>
    <source>
        <strain>ATCC 39315 / El Tor Inaba N16961</strain>
    </source>
</reference>
<keyword id="KW-0067">ATP-binding</keyword>
<keyword id="KW-0173">Coenzyme A biosynthesis</keyword>
<keyword id="KW-0963">Cytoplasm</keyword>
<keyword id="KW-0460">Magnesium</keyword>
<keyword id="KW-0547">Nucleotide-binding</keyword>
<keyword id="KW-0548">Nucleotidyltransferase</keyword>
<keyword id="KW-1185">Reference proteome</keyword>
<keyword id="KW-0808">Transferase</keyword>
<sequence>MSQKRLSRVIYPGTFDPITNGHLDLIERAAQMFDEVIIAVAASPSKNTLFTLEERVEFARQVTSHLDNVSAKGFSGLLVDFAKAEKANVLIRGLRTTVDFEYEFGLTNMYRRLMPGLESVFLTPAEEHAFISSTLVREVAIHGGNVDEFVPAIVANALHQKKKI</sequence>
<evidence type="ECO:0000255" key="1">
    <source>
        <dbReference type="HAMAP-Rule" id="MF_00151"/>
    </source>
</evidence>
<name>COAD_VIBCH</name>